<proteinExistence type="inferred from homology"/>
<keyword id="KW-0028">Amino-acid biosynthesis</keyword>
<keyword id="KW-0963">Cytoplasm</keyword>
<keyword id="KW-0368">Histidine biosynthesis</keyword>
<keyword id="KW-0456">Lyase</keyword>
<keyword id="KW-1185">Reference proteome</keyword>
<protein>
    <recommendedName>
        <fullName evidence="1">Imidazole glycerol phosphate synthase subunit HisF</fullName>
        <ecNumber evidence="1">4.3.2.10</ecNumber>
    </recommendedName>
    <alternativeName>
        <fullName evidence="1">IGP synthase cyclase subunit</fullName>
    </alternativeName>
    <alternativeName>
        <fullName evidence="1">IGP synthase subunit HisF</fullName>
    </alternativeName>
    <alternativeName>
        <fullName evidence="1">ImGP synthase subunit HisF</fullName>
        <shortName evidence="1">IGPS subunit HisF</shortName>
    </alternativeName>
</protein>
<accession>Q1QRX0</accession>
<dbReference type="EC" id="4.3.2.10" evidence="1"/>
<dbReference type="EMBL" id="CP000319">
    <property type="protein sequence ID" value="ABE61027.1"/>
    <property type="molecule type" value="Genomic_DNA"/>
</dbReference>
<dbReference type="RefSeq" id="WP_011508734.1">
    <property type="nucleotide sequence ID" value="NC_007964.1"/>
</dbReference>
<dbReference type="SMR" id="Q1QRX0"/>
<dbReference type="STRING" id="323097.Nham_0126"/>
<dbReference type="KEGG" id="nha:Nham_0126"/>
<dbReference type="eggNOG" id="COG0107">
    <property type="taxonomic scope" value="Bacteria"/>
</dbReference>
<dbReference type="HOGENOM" id="CLU_048577_4_0_5"/>
<dbReference type="OrthoDB" id="9781903at2"/>
<dbReference type="UniPathway" id="UPA00031">
    <property type="reaction ID" value="UER00010"/>
</dbReference>
<dbReference type="Proteomes" id="UP000001953">
    <property type="component" value="Chromosome"/>
</dbReference>
<dbReference type="GO" id="GO:0005737">
    <property type="term" value="C:cytoplasm"/>
    <property type="evidence" value="ECO:0007669"/>
    <property type="project" value="UniProtKB-SubCell"/>
</dbReference>
<dbReference type="GO" id="GO:0000107">
    <property type="term" value="F:imidazoleglycerol-phosphate synthase activity"/>
    <property type="evidence" value="ECO:0007669"/>
    <property type="project" value="UniProtKB-UniRule"/>
</dbReference>
<dbReference type="GO" id="GO:0016829">
    <property type="term" value="F:lyase activity"/>
    <property type="evidence" value="ECO:0007669"/>
    <property type="project" value="UniProtKB-KW"/>
</dbReference>
<dbReference type="GO" id="GO:0000105">
    <property type="term" value="P:L-histidine biosynthetic process"/>
    <property type="evidence" value="ECO:0007669"/>
    <property type="project" value="UniProtKB-UniRule"/>
</dbReference>
<dbReference type="CDD" id="cd04731">
    <property type="entry name" value="HisF"/>
    <property type="match status" value="1"/>
</dbReference>
<dbReference type="FunFam" id="3.20.20.70:FF:000006">
    <property type="entry name" value="Imidazole glycerol phosphate synthase subunit HisF"/>
    <property type="match status" value="1"/>
</dbReference>
<dbReference type="Gene3D" id="3.20.20.70">
    <property type="entry name" value="Aldolase class I"/>
    <property type="match status" value="1"/>
</dbReference>
<dbReference type="HAMAP" id="MF_01013">
    <property type="entry name" value="HisF"/>
    <property type="match status" value="1"/>
</dbReference>
<dbReference type="InterPro" id="IPR013785">
    <property type="entry name" value="Aldolase_TIM"/>
</dbReference>
<dbReference type="InterPro" id="IPR006062">
    <property type="entry name" value="His_biosynth"/>
</dbReference>
<dbReference type="InterPro" id="IPR004651">
    <property type="entry name" value="HisF"/>
</dbReference>
<dbReference type="InterPro" id="IPR050064">
    <property type="entry name" value="IGPS_HisA/HisF"/>
</dbReference>
<dbReference type="InterPro" id="IPR011060">
    <property type="entry name" value="RibuloseP-bd_barrel"/>
</dbReference>
<dbReference type="NCBIfam" id="TIGR00735">
    <property type="entry name" value="hisF"/>
    <property type="match status" value="1"/>
</dbReference>
<dbReference type="PANTHER" id="PTHR21235:SF2">
    <property type="entry name" value="IMIDAZOLE GLYCEROL PHOSPHATE SYNTHASE HISHF"/>
    <property type="match status" value="1"/>
</dbReference>
<dbReference type="PANTHER" id="PTHR21235">
    <property type="entry name" value="IMIDAZOLE GLYCEROL PHOSPHATE SYNTHASE SUBUNIT HISF/H IGP SYNTHASE SUBUNIT HISF/H"/>
    <property type="match status" value="1"/>
</dbReference>
<dbReference type="Pfam" id="PF00977">
    <property type="entry name" value="His_biosynth"/>
    <property type="match status" value="1"/>
</dbReference>
<dbReference type="SUPFAM" id="SSF51366">
    <property type="entry name" value="Ribulose-phoshate binding barrel"/>
    <property type="match status" value="1"/>
</dbReference>
<gene>
    <name evidence="1" type="primary">hisF</name>
    <name type="ordered locus">Nham_0126</name>
</gene>
<feature type="chain" id="PRO_1000063104" description="Imidazole glycerol phosphate synthase subunit HisF">
    <location>
        <begin position="1"/>
        <end position="258"/>
    </location>
</feature>
<feature type="active site" evidence="1">
    <location>
        <position position="11"/>
    </location>
</feature>
<feature type="active site" evidence="1">
    <location>
        <position position="130"/>
    </location>
</feature>
<sequence>MFKVRVIPCLDVKDGRVVKGVNFVDLRDAGDPVEAAVAYDAAGADELTFLDITATHENRGIMLDVVRRTAEACFMPVTVGGGVRTIDDIRTLLRSGADKVSINSAAVSRREFVKEAAEKFGDQCIVVAIDAKRVSRAGGSDRWEIFTHGGRKSTGIDAIDYAQEVVSLGAGEILLTSMDRDGTRQGFDLPLTRLVADSVSVPVIASGGVGNLDHLVDGIREGHATAVLAASIFHFGEFTIRQAKDHMARAGLPMRLDP</sequence>
<evidence type="ECO:0000255" key="1">
    <source>
        <dbReference type="HAMAP-Rule" id="MF_01013"/>
    </source>
</evidence>
<name>HIS6_NITHX</name>
<reference key="1">
    <citation type="submission" date="2006-03" db="EMBL/GenBank/DDBJ databases">
        <title>Complete sequence of chromosome of Nitrobacter hamburgensis X14.</title>
        <authorList>
            <consortium name="US DOE Joint Genome Institute"/>
            <person name="Copeland A."/>
            <person name="Lucas S."/>
            <person name="Lapidus A."/>
            <person name="Barry K."/>
            <person name="Detter J.C."/>
            <person name="Glavina del Rio T."/>
            <person name="Hammon N."/>
            <person name="Israni S."/>
            <person name="Dalin E."/>
            <person name="Tice H."/>
            <person name="Pitluck S."/>
            <person name="Chain P."/>
            <person name="Malfatti S."/>
            <person name="Shin M."/>
            <person name="Vergez L."/>
            <person name="Schmutz J."/>
            <person name="Larimer F."/>
            <person name="Land M."/>
            <person name="Hauser L."/>
            <person name="Kyrpides N."/>
            <person name="Ivanova N."/>
            <person name="Ward B."/>
            <person name="Arp D."/>
            <person name="Klotz M."/>
            <person name="Stein L."/>
            <person name="O'Mullan G."/>
            <person name="Starkenburg S."/>
            <person name="Sayavedra L."/>
            <person name="Poret-Peterson A.T."/>
            <person name="Gentry M.E."/>
            <person name="Bruce D."/>
            <person name="Richardson P."/>
        </authorList>
    </citation>
    <scope>NUCLEOTIDE SEQUENCE [LARGE SCALE GENOMIC DNA]</scope>
    <source>
        <strain>DSM 10229 / NCIMB 13809 / X14</strain>
    </source>
</reference>
<organism>
    <name type="scientific">Nitrobacter hamburgensis (strain DSM 10229 / NCIMB 13809 / X14)</name>
    <dbReference type="NCBI Taxonomy" id="323097"/>
    <lineage>
        <taxon>Bacteria</taxon>
        <taxon>Pseudomonadati</taxon>
        <taxon>Pseudomonadota</taxon>
        <taxon>Alphaproteobacteria</taxon>
        <taxon>Hyphomicrobiales</taxon>
        <taxon>Nitrobacteraceae</taxon>
        <taxon>Nitrobacter</taxon>
    </lineage>
</organism>
<comment type="function">
    <text evidence="1">IGPS catalyzes the conversion of PRFAR and glutamine to IGP, AICAR and glutamate. The HisF subunit catalyzes the cyclization activity that produces IGP and AICAR from PRFAR using the ammonia provided by the HisH subunit.</text>
</comment>
<comment type="catalytic activity">
    <reaction evidence="1">
        <text>5-[(5-phospho-1-deoxy-D-ribulos-1-ylimino)methylamino]-1-(5-phospho-beta-D-ribosyl)imidazole-4-carboxamide + L-glutamine = D-erythro-1-(imidazol-4-yl)glycerol 3-phosphate + 5-amino-1-(5-phospho-beta-D-ribosyl)imidazole-4-carboxamide + L-glutamate + H(+)</text>
        <dbReference type="Rhea" id="RHEA:24793"/>
        <dbReference type="ChEBI" id="CHEBI:15378"/>
        <dbReference type="ChEBI" id="CHEBI:29985"/>
        <dbReference type="ChEBI" id="CHEBI:58278"/>
        <dbReference type="ChEBI" id="CHEBI:58359"/>
        <dbReference type="ChEBI" id="CHEBI:58475"/>
        <dbReference type="ChEBI" id="CHEBI:58525"/>
        <dbReference type="EC" id="4.3.2.10"/>
    </reaction>
</comment>
<comment type="pathway">
    <text evidence="1">Amino-acid biosynthesis; L-histidine biosynthesis; L-histidine from 5-phospho-alpha-D-ribose 1-diphosphate: step 5/9.</text>
</comment>
<comment type="subunit">
    <text evidence="1">Heterodimer of HisH and HisF.</text>
</comment>
<comment type="subcellular location">
    <subcellularLocation>
        <location evidence="1">Cytoplasm</location>
    </subcellularLocation>
</comment>
<comment type="similarity">
    <text evidence="1">Belongs to the HisA/HisF family.</text>
</comment>